<name>PSMG1_NEMVE</name>
<reference key="1">
    <citation type="journal article" date="2007" name="Science">
        <title>Sea anemone genome reveals ancestral eumetazoan gene repertoire and genomic organization.</title>
        <authorList>
            <person name="Putnam N.H."/>
            <person name="Srivastava M."/>
            <person name="Hellsten U."/>
            <person name="Dirks B."/>
            <person name="Chapman J."/>
            <person name="Salamov A."/>
            <person name="Terry A."/>
            <person name="Shapiro H."/>
            <person name="Lindquist E."/>
            <person name="Kapitonov V.V."/>
            <person name="Jurka J."/>
            <person name="Genikhovich G."/>
            <person name="Grigoriev I.V."/>
            <person name="Lucas S.M."/>
            <person name="Steele R.E."/>
            <person name="Finnerty J.R."/>
            <person name="Technau U."/>
            <person name="Martindale M.Q."/>
            <person name="Rokhsar D.S."/>
        </authorList>
    </citation>
    <scope>NUCLEOTIDE SEQUENCE [LARGE SCALE GENOMIC DNA]</scope>
    <source>
        <strain>CH2 X CH6</strain>
    </source>
</reference>
<sequence length="257" mass="28785">MVDAFGLWELNFPCSRVDDDDDEEEQITKEQEEQLCPQFVFSPQFSKDVGKTEPIECSVLVLGVGEVASTFLEVHFLCGNNSSVAAVISDKKTEKNFEYLVKNLRNKRSSLLHQLTRNNDVMVCQISSHVEQDKGFYWTQKIFSHIRPAKVVILTSSPASEYNSDDPSEIKTDFVKMMKTNAWSNSCAGPDITDIQTPNTVKGLAASVLTHCQIYKLPAALFMCYTESMHVDAQAVEAFRCKAPYKQSSMGLESGKL</sequence>
<evidence type="ECO:0000250" key="1"/>
<evidence type="ECO:0000305" key="2"/>
<organism>
    <name type="scientific">Nematostella vectensis</name>
    <name type="common">Starlet sea anemone</name>
    <dbReference type="NCBI Taxonomy" id="45351"/>
    <lineage>
        <taxon>Eukaryota</taxon>
        <taxon>Metazoa</taxon>
        <taxon>Cnidaria</taxon>
        <taxon>Anthozoa</taxon>
        <taxon>Hexacorallia</taxon>
        <taxon>Actiniaria</taxon>
        <taxon>Edwardsiidae</taxon>
        <taxon>Nematostella</taxon>
    </lineage>
</organism>
<gene>
    <name type="primary">psmg1</name>
    <name type="ORF">v1g202556</name>
</gene>
<dbReference type="EMBL" id="DS469542">
    <property type="protein sequence ID" value="EDO44667.1"/>
    <property type="molecule type" value="Genomic_DNA"/>
</dbReference>
<dbReference type="RefSeq" id="XP_001636730.1">
    <property type="nucleotide sequence ID" value="XM_001636680.1"/>
</dbReference>
<dbReference type="SMR" id="A7RV13"/>
<dbReference type="STRING" id="45351.A7RV13"/>
<dbReference type="EnsemblMetazoa" id="EDO44667">
    <property type="protein sequence ID" value="EDO44667"/>
    <property type="gene ID" value="NEMVEDRAFT_v1g202556"/>
</dbReference>
<dbReference type="eggNOG" id="ENOG502QTPH">
    <property type="taxonomic scope" value="Eukaryota"/>
</dbReference>
<dbReference type="HOGENOM" id="CLU_083637_0_0_1"/>
<dbReference type="InParanoid" id="A7RV13"/>
<dbReference type="OMA" id="SVLICQV"/>
<dbReference type="PhylomeDB" id="A7RV13"/>
<dbReference type="Proteomes" id="UP000001593">
    <property type="component" value="Unassembled WGS sequence"/>
</dbReference>
<dbReference type="GO" id="GO:0005783">
    <property type="term" value="C:endoplasmic reticulum"/>
    <property type="evidence" value="ECO:0000318"/>
    <property type="project" value="GO_Central"/>
</dbReference>
<dbReference type="GO" id="GO:0070628">
    <property type="term" value="F:proteasome binding"/>
    <property type="evidence" value="ECO:0000318"/>
    <property type="project" value="GO_Central"/>
</dbReference>
<dbReference type="GO" id="GO:0080129">
    <property type="term" value="P:proteasome core complex assembly"/>
    <property type="evidence" value="ECO:0000318"/>
    <property type="project" value="GO_Central"/>
</dbReference>
<dbReference type="InterPro" id="IPR016565">
    <property type="entry name" value="Proteasome_assmbl_chp_1"/>
</dbReference>
<dbReference type="PANTHER" id="PTHR15069">
    <property type="entry name" value="PROTEASOME ASSEMBLY CHAPERONE 1"/>
    <property type="match status" value="1"/>
</dbReference>
<dbReference type="PANTHER" id="PTHR15069:SF1">
    <property type="entry name" value="PROTEASOME ASSEMBLY CHAPERONE 1"/>
    <property type="match status" value="1"/>
</dbReference>
<dbReference type="Pfam" id="PF16094">
    <property type="entry name" value="PAC1"/>
    <property type="match status" value="1"/>
</dbReference>
<protein>
    <recommendedName>
        <fullName>Proteasome assembly chaperone 1</fullName>
    </recommendedName>
</protein>
<feature type="chain" id="PRO_0000329456" description="Proteasome assembly chaperone 1">
    <location>
        <begin position="1"/>
        <end position="257"/>
    </location>
</feature>
<proteinExistence type="inferred from homology"/>
<accession>A7RV13</accession>
<comment type="function">
    <text evidence="1">Chaperone protein which promotes assembly of the 20S proteasome as part of a heterodimer with psmg2.</text>
</comment>
<comment type="subunit">
    <text evidence="1">Forms a heterodimer with psmg2.</text>
</comment>
<comment type="similarity">
    <text evidence="2">Belongs to the PSMG1 family.</text>
</comment>
<keyword id="KW-0143">Chaperone</keyword>
<keyword id="KW-1185">Reference proteome</keyword>